<sequence length="195" mass="21532">MKIWTSEHVFDHPWEMVTTAAMQKYPNPMNPSVVGVDVLDRHVDPSGKLHSHRLLSTEWGLPSIVKSLIGAARTKTYVQEHSVVDPVKKTMELKSTNISFTNMVSVDERLTYKPHPQDPEKTVLTQEAIITVKGVSLSSYLEGLMASTISSNANKGREAMEWVIHKLNAEIEDLAASARGSIRTPMAAAAALVEK</sequence>
<protein>
    <recommendedName>
        <fullName>PRELI domain containing protein 3B</fullName>
    </recommendedName>
    <alternativeName>
        <fullName>BCR/ABL-regulated protein</fullName>
    </alternativeName>
    <alternativeName>
        <fullName>Protein slowmo homolog 2</fullName>
    </alternativeName>
</protein>
<reference key="1">
    <citation type="submission" date="2003-09" db="EMBL/GenBank/DDBJ databases">
        <title>Differential display analysis of BCR/ABL-regulated genes.</title>
        <authorList>
            <person name="Guang L."/>
            <person name="Masabumi S."/>
            <person name="Maru Y."/>
        </authorList>
    </citation>
    <scope>NUCLEOTIDE SEQUENCE [MRNA]</scope>
    <source>
        <tissue>Ovary</tissue>
    </source>
</reference>
<comment type="similarity">
    <text evidence="3">Belongs to the slowmo family.</text>
</comment>
<organism>
    <name type="scientific">Cricetulus griseus</name>
    <name type="common">Chinese hamster</name>
    <name type="synonym">Cricetulus barabensis griseus</name>
    <dbReference type="NCBI Taxonomy" id="10029"/>
    <lineage>
        <taxon>Eukaryota</taxon>
        <taxon>Metazoa</taxon>
        <taxon>Chordata</taxon>
        <taxon>Craniata</taxon>
        <taxon>Vertebrata</taxon>
        <taxon>Euteleostomi</taxon>
        <taxon>Mammalia</taxon>
        <taxon>Eutheria</taxon>
        <taxon>Euarchontoglires</taxon>
        <taxon>Glires</taxon>
        <taxon>Rodentia</taxon>
        <taxon>Myomorpha</taxon>
        <taxon>Muroidea</taxon>
        <taxon>Cricetidae</taxon>
        <taxon>Cricetinae</taxon>
        <taxon>Cricetulus</taxon>
    </lineage>
</organism>
<feature type="chain" id="PRO_0000327686" description="PRELI domain containing protein 3B">
    <location>
        <begin position="1"/>
        <end position="195"/>
    </location>
</feature>
<feature type="domain" description="PRELI/MSF1" evidence="2">
    <location>
        <begin position="1"/>
        <end position="172"/>
    </location>
</feature>
<feature type="modified residue" description="Phosphoserine" evidence="1">
    <location>
        <position position="46"/>
    </location>
</feature>
<feature type="modified residue" description="Phosphoserine" evidence="1">
    <location>
        <position position="51"/>
    </location>
</feature>
<dbReference type="EMBL" id="AY392425">
    <property type="protein sequence ID" value="AAQ94084.1"/>
    <property type="molecule type" value="mRNA"/>
</dbReference>
<dbReference type="RefSeq" id="NP_001233714.1">
    <property type="nucleotide sequence ID" value="NM_001246785.1"/>
</dbReference>
<dbReference type="SMR" id="Q6TMK8"/>
<dbReference type="PaxDb" id="10029-NP_001233714.1"/>
<dbReference type="Ensembl" id="ENSCGRT00001026137.1">
    <property type="protein sequence ID" value="ENSCGRP00001021893.1"/>
    <property type="gene ID" value="ENSCGRG00001020600.1"/>
</dbReference>
<dbReference type="GeneID" id="100689354"/>
<dbReference type="KEGG" id="cge:100689354"/>
<dbReference type="CTD" id="51012"/>
<dbReference type="eggNOG" id="KOG3336">
    <property type="taxonomic scope" value="Eukaryota"/>
</dbReference>
<dbReference type="GeneTree" id="ENSGT00950000182810"/>
<dbReference type="OrthoDB" id="407630at2759"/>
<dbReference type="Proteomes" id="UP000694386">
    <property type="component" value="Unplaced"/>
</dbReference>
<dbReference type="Proteomes" id="UP001108280">
    <property type="component" value="Chromosome 6"/>
</dbReference>
<dbReference type="GO" id="GO:0005758">
    <property type="term" value="C:mitochondrial intermembrane space"/>
    <property type="evidence" value="ECO:0007669"/>
    <property type="project" value="InterPro"/>
</dbReference>
<dbReference type="InterPro" id="IPR006797">
    <property type="entry name" value="PRELI/MSF1_dom"/>
</dbReference>
<dbReference type="InterPro" id="IPR037365">
    <property type="entry name" value="Slowmo/Ups"/>
</dbReference>
<dbReference type="PANTHER" id="PTHR11158">
    <property type="entry name" value="MSF1/PX19 RELATED"/>
    <property type="match status" value="1"/>
</dbReference>
<dbReference type="Pfam" id="PF04707">
    <property type="entry name" value="PRELI"/>
    <property type="match status" value="1"/>
</dbReference>
<dbReference type="PROSITE" id="PS50904">
    <property type="entry name" value="PRELI_MSF1"/>
    <property type="match status" value="1"/>
</dbReference>
<name>PLD3B_CRIGR</name>
<accession>Q6TMK8</accession>
<evidence type="ECO:0000250" key="1">
    <source>
        <dbReference type="UniProtKB" id="Q6P9U4"/>
    </source>
</evidence>
<evidence type="ECO:0000255" key="2">
    <source>
        <dbReference type="PROSITE-ProRule" id="PRU00158"/>
    </source>
</evidence>
<evidence type="ECO:0000305" key="3"/>
<keyword id="KW-0597">Phosphoprotein</keyword>
<gene>
    <name type="primary">PRELID3B</name>
    <name type="synonym">SLMO2</name>
</gene>
<proteinExistence type="evidence at transcript level"/>